<evidence type="ECO:0000255" key="1">
    <source>
        <dbReference type="PROSITE-ProRule" id="PRU00037"/>
    </source>
</evidence>
<evidence type="ECO:0000305" key="2"/>
<comment type="similarity">
    <text evidence="2">Belongs to the mimivirus BTB/WD family.</text>
</comment>
<feature type="chain" id="PRO_0000186228" description="Putative BTB/POZ domain-containing protein L98">
    <location>
        <begin position="1"/>
        <end position="495"/>
    </location>
</feature>
<feature type="domain" description="BTB" evidence="1">
    <location>
        <begin position="15"/>
        <end position="85"/>
    </location>
</feature>
<proteinExistence type="inferred from homology"/>
<accession>Q5UPH2</accession>
<dbReference type="EMBL" id="AY653733">
    <property type="protein sequence ID" value="AAV50373.1"/>
    <property type="molecule type" value="Genomic_DNA"/>
</dbReference>
<dbReference type="KEGG" id="vg:9924695"/>
<dbReference type="OrthoDB" id="30405at10239"/>
<dbReference type="Proteomes" id="UP000001134">
    <property type="component" value="Genome"/>
</dbReference>
<dbReference type="Gene3D" id="3.30.710.10">
    <property type="entry name" value="Potassium Channel Kv1.1, Chain A"/>
    <property type="match status" value="1"/>
</dbReference>
<dbReference type="InterPro" id="IPR000210">
    <property type="entry name" value="BTB/POZ_dom"/>
</dbReference>
<dbReference type="InterPro" id="IPR011333">
    <property type="entry name" value="SKP1/BTB/POZ_sf"/>
</dbReference>
<dbReference type="Pfam" id="PF00651">
    <property type="entry name" value="BTB"/>
    <property type="match status" value="1"/>
</dbReference>
<dbReference type="SUPFAM" id="SSF54695">
    <property type="entry name" value="POZ domain"/>
    <property type="match status" value="1"/>
</dbReference>
<dbReference type="SUPFAM" id="SSF69322">
    <property type="entry name" value="Tricorn protease domain 2"/>
    <property type="match status" value="1"/>
</dbReference>
<dbReference type="PROSITE" id="PS50097">
    <property type="entry name" value="BTB"/>
    <property type="match status" value="1"/>
</dbReference>
<protein>
    <recommendedName>
        <fullName>Putative BTB/POZ domain-containing protein L98</fullName>
    </recommendedName>
</protein>
<organismHost>
    <name type="scientific">Acanthamoeba polyphaga</name>
    <name type="common">Amoeba</name>
    <dbReference type="NCBI Taxonomy" id="5757"/>
</organismHost>
<keyword id="KW-1185">Reference proteome</keyword>
<sequence length="495" mass="57550">MELSLSTLFDSEILSDLTIEFVDNHTKSKVHFHKNILYLGCSYFRSMFNRFSESNSREIVIKVPDVNASIDIIKYFYGIETTNDYWKYVLNTYVCKKFFGLETEFPANITVVSDDIEEFLDFIDKMGYDDNTLKLIAKNIPESYNLQTFPKYFIKTLFRVLDTKYLILVFGHEIILVDINGTTYKSIKFDTSIKGACHIQNTNKIAYRTDNIIRVYDFEENKIVFEKKNSYTHRICSANGKLFIGDNSRVEEINPINGESYRFFRSTYDEKIILEVFYDNEFIIVFGQPHVHSLRIKTLICFYDMKMGGKIRSFYYDGNVDMLEYCPVNKCMFFCENHKKTGKIYRVCFYDSSIKIFTRKELVYESKYSKIIKIIWISTKCSLIFCCENGTIGTYCIMTNETKILTDINDKIKDAVLIKHNILAILSPNTVHIIDINKCGDNANINKFNVSSDIVKIMSTSSINTKLANKISDLLDDIDDESDDDSDDDIITTKN</sequence>
<organism>
    <name type="scientific">Acanthamoeba polyphaga mimivirus</name>
    <name type="common">APMV</name>
    <dbReference type="NCBI Taxonomy" id="212035"/>
    <lineage>
        <taxon>Viruses</taxon>
        <taxon>Varidnaviria</taxon>
        <taxon>Bamfordvirae</taxon>
        <taxon>Nucleocytoviricota</taxon>
        <taxon>Megaviricetes</taxon>
        <taxon>Imitervirales</taxon>
        <taxon>Mimiviridae</taxon>
        <taxon>Megamimivirinae</taxon>
        <taxon>Mimivirus</taxon>
        <taxon>Mimivirus bradfordmassiliense</taxon>
    </lineage>
</organism>
<gene>
    <name type="ordered locus">MIMI_L98</name>
</gene>
<name>YL098_MIMIV</name>
<reference key="1">
    <citation type="journal article" date="2004" name="Science">
        <title>The 1.2-megabase genome sequence of Mimivirus.</title>
        <authorList>
            <person name="Raoult D."/>
            <person name="Audic S."/>
            <person name="Robert C."/>
            <person name="Abergel C."/>
            <person name="Renesto P."/>
            <person name="Ogata H."/>
            <person name="La Scola B."/>
            <person name="Susan M."/>
            <person name="Claverie J.-M."/>
        </authorList>
    </citation>
    <scope>NUCLEOTIDE SEQUENCE [LARGE SCALE GENOMIC DNA]</scope>
    <source>
        <strain>Rowbotham-Bradford</strain>
    </source>
</reference>